<reference key="1">
    <citation type="journal article" date="2005" name="Nature">
        <title>The genome of the social amoeba Dictyostelium discoideum.</title>
        <authorList>
            <person name="Eichinger L."/>
            <person name="Pachebat J.A."/>
            <person name="Gloeckner G."/>
            <person name="Rajandream M.A."/>
            <person name="Sucgang R."/>
            <person name="Berriman M."/>
            <person name="Song J."/>
            <person name="Olsen R."/>
            <person name="Szafranski K."/>
            <person name="Xu Q."/>
            <person name="Tunggal B."/>
            <person name="Kummerfeld S."/>
            <person name="Madera M."/>
            <person name="Konfortov B.A."/>
            <person name="Rivero F."/>
            <person name="Bankier A.T."/>
            <person name="Lehmann R."/>
            <person name="Hamlin N."/>
            <person name="Davies R."/>
            <person name="Gaudet P."/>
            <person name="Fey P."/>
            <person name="Pilcher K."/>
            <person name="Chen G."/>
            <person name="Saunders D."/>
            <person name="Sodergren E.J."/>
            <person name="Davis P."/>
            <person name="Kerhornou A."/>
            <person name="Nie X."/>
            <person name="Hall N."/>
            <person name="Anjard C."/>
            <person name="Hemphill L."/>
            <person name="Bason N."/>
            <person name="Farbrother P."/>
            <person name="Desany B."/>
            <person name="Just E."/>
            <person name="Morio T."/>
            <person name="Rost R."/>
            <person name="Churcher C.M."/>
            <person name="Cooper J."/>
            <person name="Haydock S."/>
            <person name="van Driessche N."/>
            <person name="Cronin A."/>
            <person name="Goodhead I."/>
            <person name="Muzny D.M."/>
            <person name="Mourier T."/>
            <person name="Pain A."/>
            <person name="Lu M."/>
            <person name="Harper D."/>
            <person name="Lindsay R."/>
            <person name="Hauser H."/>
            <person name="James K.D."/>
            <person name="Quiles M."/>
            <person name="Madan Babu M."/>
            <person name="Saito T."/>
            <person name="Buchrieser C."/>
            <person name="Wardroper A."/>
            <person name="Felder M."/>
            <person name="Thangavelu M."/>
            <person name="Johnson D."/>
            <person name="Knights A."/>
            <person name="Loulseged H."/>
            <person name="Mungall K.L."/>
            <person name="Oliver K."/>
            <person name="Price C."/>
            <person name="Quail M.A."/>
            <person name="Urushihara H."/>
            <person name="Hernandez J."/>
            <person name="Rabbinowitsch E."/>
            <person name="Steffen D."/>
            <person name="Sanders M."/>
            <person name="Ma J."/>
            <person name="Kohara Y."/>
            <person name="Sharp S."/>
            <person name="Simmonds M.N."/>
            <person name="Spiegler S."/>
            <person name="Tivey A."/>
            <person name="Sugano S."/>
            <person name="White B."/>
            <person name="Walker D."/>
            <person name="Woodward J.R."/>
            <person name="Winckler T."/>
            <person name="Tanaka Y."/>
            <person name="Shaulsky G."/>
            <person name="Schleicher M."/>
            <person name="Weinstock G.M."/>
            <person name="Rosenthal A."/>
            <person name="Cox E.C."/>
            <person name="Chisholm R.L."/>
            <person name="Gibbs R.A."/>
            <person name="Loomis W.F."/>
            <person name="Platzer M."/>
            <person name="Kay R.R."/>
            <person name="Williams J.G."/>
            <person name="Dear P.H."/>
            <person name="Noegel A.A."/>
            <person name="Barrell B.G."/>
            <person name="Kuspa A."/>
        </authorList>
    </citation>
    <scope>NUCLEOTIDE SEQUENCE [LARGE SCALE GENOMIC DNA]</scope>
    <source>
        <strain>AX4</strain>
    </source>
</reference>
<dbReference type="EC" id="3.2.1.52"/>
<dbReference type="EMBL" id="AAFI02000047">
    <property type="protein sequence ID" value="EAL66129.1"/>
    <property type="molecule type" value="Genomic_DNA"/>
</dbReference>
<dbReference type="SMR" id="Q54SC9"/>
<dbReference type="FunCoup" id="Q54SC9">
    <property type="interactions" value="106"/>
</dbReference>
<dbReference type="STRING" id="44689.Q54SC9"/>
<dbReference type="GlyCosmos" id="Q54SC9">
    <property type="glycosylation" value="5 sites, No reported glycans"/>
</dbReference>
<dbReference type="GlyGen" id="Q54SC9">
    <property type="glycosylation" value="5 sites"/>
</dbReference>
<dbReference type="PaxDb" id="44689-DDB0304517"/>
<dbReference type="EnsemblProtists" id="EAL66129">
    <property type="protein sequence ID" value="EAL66129"/>
    <property type="gene ID" value="DDB_G0282539"/>
</dbReference>
<dbReference type="KEGG" id="ddi:DDB_G0282539"/>
<dbReference type="dictyBase" id="DDB_G0282539">
    <property type="gene designation" value="nagB"/>
</dbReference>
<dbReference type="VEuPathDB" id="AmoebaDB:DDB_G0282539"/>
<dbReference type="eggNOG" id="KOG2499">
    <property type="taxonomic scope" value="Eukaryota"/>
</dbReference>
<dbReference type="HOGENOM" id="CLU_007082_0_3_1"/>
<dbReference type="InParanoid" id="Q54SC9"/>
<dbReference type="OMA" id="KMWPRAA"/>
<dbReference type="PhylomeDB" id="Q54SC9"/>
<dbReference type="Reactome" id="R-DDI-2022857">
    <property type="pathway name" value="Keratan sulfate degradation"/>
</dbReference>
<dbReference type="Reactome" id="R-DDI-2024101">
    <property type="pathway name" value="CS/DS degradation"/>
</dbReference>
<dbReference type="Reactome" id="R-DDI-2160916">
    <property type="pathway name" value="Hyaluronan uptake and degradation"/>
</dbReference>
<dbReference type="Reactome" id="R-DDI-9840310">
    <property type="pathway name" value="Glycosphingolipid catabolism"/>
</dbReference>
<dbReference type="PRO" id="PR:Q54SC9"/>
<dbReference type="Proteomes" id="UP000002195">
    <property type="component" value="Chromosome 3"/>
</dbReference>
<dbReference type="GO" id="GO:0005764">
    <property type="term" value="C:lysosome"/>
    <property type="evidence" value="ECO:0000318"/>
    <property type="project" value="GO_Central"/>
</dbReference>
<dbReference type="GO" id="GO:0016020">
    <property type="term" value="C:membrane"/>
    <property type="evidence" value="ECO:0000318"/>
    <property type="project" value="GO_Central"/>
</dbReference>
<dbReference type="GO" id="GO:0004563">
    <property type="term" value="F:beta-N-acetylhexosaminidase activity"/>
    <property type="evidence" value="ECO:0000318"/>
    <property type="project" value="GO_Central"/>
</dbReference>
<dbReference type="GO" id="GO:0005975">
    <property type="term" value="P:carbohydrate metabolic process"/>
    <property type="evidence" value="ECO:0007669"/>
    <property type="project" value="InterPro"/>
</dbReference>
<dbReference type="GO" id="GO:0030203">
    <property type="term" value="P:glycosaminoglycan metabolic process"/>
    <property type="evidence" value="ECO:0000318"/>
    <property type="project" value="GO_Central"/>
</dbReference>
<dbReference type="GO" id="GO:0006491">
    <property type="term" value="P:N-glycan processing"/>
    <property type="evidence" value="ECO:0000318"/>
    <property type="project" value="GO_Central"/>
</dbReference>
<dbReference type="CDD" id="cd06562">
    <property type="entry name" value="GH20_HexA_HexB-like"/>
    <property type="match status" value="1"/>
</dbReference>
<dbReference type="FunFam" id="3.20.20.80:FF:000063">
    <property type="entry name" value="Beta-hexosaminidase"/>
    <property type="match status" value="1"/>
</dbReference>
<dbReference type="Gene3D" id="3.30.379.10">
    <property type="entry name" value="Chitobiase/beta-hexosaminidase domain 2-like"/>
    <property type="match status" value="1"/>
</dbReference>
<dbReference type="Gene3D" id="3.20.20.80">
    <property type="entry name" value="Glycosidases"/>
    <property type="match status" value="1"/>
</dbReference>
<dbReference type="InterPro" id="IPR025705">
    <property type="entry name" value="Beta_hexosaminidase_sua/sub"/>
</dbReference>
<dbReference type="InterPro" id="IPR015883">
    <property type="entry name" value="Glyco_hydro_20_cat"/>
</dbReference>
<dbReference type="InterPro" id="IPR017853">
    <property type="entry name" value="Glycoside_hydrolase_SF"/>
</dbReference>
<dbReference type="InterPro" id="IPR029018">
    <property type="entry name" value="Hex-like_dom2"/>
</dbReference>
<dbReference type="InterPro" id="IPR029019">
    <property type="entry name" value="HEX_eukaryotic_N"/>
</dbReference>
<dbReference type="PANTHER" id="PTHR22600">
    <property type="entry name" value="BETA-HEXOSAMINIDASE"/>
    <property type="match status" value="1"/>
</dbReference>
<dbReference type="PANTHER" id="PTHR22600:SF54">
    <property type="entry name" value="BETA-HEXOSAMINIDASE SUBUNIT A1-RELATED"/>
    <property type="match status" value="1"/>
</dbReference>
<dbReference type="Pfam" id="PF00728">
    <property type="entry name" value="Glyco_hydro_20"/>
    <property type="match status" value="1"/>
</dbReference>
<dbReference type="Pfam" id="PF14845">
    <property type="entry name" value="Glycohydro_20b2"/>
    <property type="match status" value="1"/>
</dbReference>
<dbReference type="PIRSF" id="PIRSF001093">
    <property type="entry name" value="B-hxosamndse_ab_euk"/>
    <property type="match status" value="1"/>
</dbReference>
<dbReference type="PRINTS" id="PR00738">
    <property type="entry name" value="GLHYDRLASE20"/>
</dbReference>
<dbReference type="SUPFAM" id="SSF51445">
    <property type="entry name" value="(Trans)glycosidases"/>
    <property type="match status" value="1"/>
</dbReference>
<dbReference type="SUPFAM" id="SSF55545">
    <property type="entry name" value="beta-N-acetylhexosaminidase-like domain"/>
    <property type="match status" value="1"/>
</dbReference>
<comment type="function">
    <text evidence="1">Responsible for the degradation of GM2 gangliosides, and a variety of other molecules containing terminal N-acetyl hexosamines.</text>
</comment>
<comment type="catalytic activity">
    <reaction>
        <text>Hydrolysis of terminal non-reducing N-acetyl-D-hexosamine residues in N-acetyl-beta-D-hexosaminides.</text>
        <dbReference type="EC" id="3.2.1.52"/>
    </reaction>
</comment>
<comment type="subcellular location">
    <subcellularLocation>
        <location evidence="1">Lysosome</location>
    </subcellularLocation>
</comment>
<comment type="similarity">
    <text evidence="3">Belongs to the glycosyl hydrolase 20 family.</text>
</comment>
<name>HEXA2_DICDI</name>
<protein>
    <recommendedName>
        <fullName>Beta-hexosaminidase subunit A2</fullName>
        <ecNumber>3.2.1.52</ecNumber>
    </recommendedName>
    <alternativeName>
        <fullName>Beta-N-acetylhexosaminidase subunit A2</fullName>
    </alternativeName>
    <alternativeName>
        <fullName>N-acetyl-beta-glucosaminidase subunit A2</fullName>
    </alternativeName>
</protein>
<keyword id="KW-0325">Glycoprotein</keyword>
<keyword id="KW-0326">Glycosidase</keyword>
<keyword id="KW-0378">Hydrolase</keyword>
<keyword id="KW-0458">Lysosome</keyword>
<keyword id="KW-1185">Reference proteome</keyword>
<keyword id="KW-0732">Signal</keyword>
<sequence>MINKFLTIFLIFSIVIIKVLSQSSNEQPLNVVPYPQEVTMIGCNIPLSVGSISIKSNIESTILSISISRYQSLFFPFVSNNVLKDSSSNIELSLIIASDDETLELGIDESYFLLVNQDTYQIKANTIYGAMRGLETFKQMVVYDVVENSYSLTCAEVVDYPTYQWRGLLVDNARHFLPKNMVLHIIDSMGYNKFNTMHWHLIDTVAFPVESKTYPKLTEALLGPGAIITHDDILEVVAYAKTYGIRVIPEFDVPGHSASWGVGYPELLSNCPGYPQSSIPLDCSNPYTYSFLENFFSEIAPLFQDSYFHTGGDELVIDCWANDTSIQKWMKTNNYNTSDAFQYFEDQLDVILKSINRTKIAWNDVLQHGVKFDKETTLVQTWTNINDLRDVLAAGYKTITSFFFYLDRQSPTGNHYHYEWQDTWEDFYASDPRLNITSNAENILGGEATMFGEQVSTVNWDARVWPRAIGISERLWSATEINNITLALPRIGQFSCDMSRRGISSGPLFPDFCSLPDDLSFSFKPVYQLSKDEIKLILKKK</sequence>
<gene>
    <name type="primary">hexa2</name>
    <name type="ORF">DDB_G0282539</name>
</gene>
<organism>
    <name type="scientific">Dictyostelium discoideum</name>
    <name type="common">Social amoeba</name>
    <dbReference type="NCBI Taxonomy" id="44689"/>
    <lineage>
        <taxon>Eukaryota</taxon>
        <taxon>Amoebozoa</taxon>
        <taxon>Evosea</taxon>
        <taxon>Eumycetozoa</taxon>
        <taxon>Dictyostelia</taxon>
        <taxon>Dictyosteliales</taxon>
        <taxon>Dictyosteliaceae</taxon>
        <taxon>Dictyostelium</taxon>
    </lineage>
</organism>
<proteinExistence type="inferred from homology"/>
<feature type="signal peptide" evidence="2">
    <location>
        <begin position="1"/>
        <end position="21"/>
    </location>
</feature>
<feature type="chain" id="PRO_0000331236" description="Beta-hexosaminidase subunit A2">
    <location>
        <begin position="22"/>
        <end position="541"/>
    </location>
</feature>
<feature type="active site" description="Proton donor" evidence="1">
    <location>
        <position position="314"/>
    </location>
</feature>
<feature type="glycosylation site" description="N-linked (GlcNAc...) asparagine" evidence="2">
    <location>
        <position position="322"/>
    </location>
</feature>
<feature type="glycosylation site" description="N-linked (GlcNAc...) asparagine" evidence="2">
    <location>
        <position position="336"/>
    </location>
</feature>
<feature type="glycosylation site" description="N-linked (GlcNAc...) asparagine" evidence="2">
    <location>
        <position position="356"/>
    </location>
</feature>
<feature type="glycosylation site" description="N-linked (GlcNAc...) asparagine" evidence="2">
    <location>
        <position position="435"/>
    </location>
</feature>
<feature type="glycosylation site" description="N-linked (GlcNAc...) asparagine" evidence="2">
    <location>
        <position position="483"/>
    </location>
</feature>
<evidence type="ECO:0000250" key="1"/>
<evidence type="ECO:0000255" key="2"/>
<evidence type="ECO:0000305" key="3"/>
<accession>Q54SC9</accession>